<protein>
    <recommendedName>
        <fullName>Interferon tau-8</fullName>
        <shortName>IFN-tau-8</shortName>
    </recommendedName>
    <alternativeName>
        <fullName>Antiluteolysin</fullName>
    </alternativeName>
    <alternativeName>
        <fullName>TP-08</fullName>
    </alternativeName>
    <alternativeName>
        <fullName>Trophoblast antiluteolytic protein</fullName>
    </alternativeName>
    <alternativeName>
        <fullName>Trophoblast protein 1</fullName>
        <shortName>TP-1</shortName>
    </alternativeName>
    <alternativeName>
        <fullName>Trophoblastin</fullName>
    </alternativeName>
</protein>
<sequence>MAFVLSLLMALVLVSYGPGGSLGCYLSQRLMLDARENLRLLDRMNRLSPHSCLQDRKDFGLPQEMVEGDQLQEDQAFPVLYEMLQQSFNLFYTEHSSAAWDTTLLDQLCTGLQQQLEDLDTCRGQVMGEEDSELGNMDPIVTVKKYFQGIYDYLQEKGYSDCAWEIVRVEMMRALTSSTTLQKRLTKTGGDLNSP</sequence>
<dbReference type="EMBL" id="M88772">
    <property type="protein sequence ID" value="AAA31506.1"/>
    <property type="molecule type" value="Genomic_DNA"/>
</dbReference>
<dbReference type="PIR" id="I47069">
    <property type="entry name" value="I47069"/>
</dbReference>
<dbReference type="SMR" id="Q08072"/>
<dbReference type="Proteomes" id="UP000002356">
    <property type="component" value="Unplaced"/>
</dbReference>
<dbReference type="GO" id="GO:0005615">
    <property type="term" value="C:extracellular space"/>
    <property type="evidence" value="ECO:0007669"/>
    <property type="project" value="UniProtKB-KW"/>
</dbReference>
<dbReference type="GO" id="GO:0005125">
    <property type="term" value="F:cytokine activity"/>
    <property type="evidence" value="ECO:0007669"/>
    <property type="project" value="UniProtKB-KW"/>
</dbReference>
<dbReference type="GO" id="GO:0005126">
    <property type="term" value="F:cytokine receptor binding"/>
    <property type="evidence" value="ECO:0007669"/>
    <property type="project" value="InterPro"/>
</dbReference>
<dbReference type="GO" id="GO:0005179">
    <property type="term" value="F:hormone activity"/>
    <property type="evidence" value="ECO:0007669"/>
    <property type="project" value="UniProtKB-KW"/>
</dbReference>
<dbReference type="GO" id="GO:0051607">
    <property type="term" value="P:defense response to virus"/>
    <property type="evidence" value="ECO:0007669"/>
    <property type="project" value="UniProtKB-KW"/>
</dbReference>
<dbReference type="GO" id="GO:0007565">
    <property type="term" value="P:female pregnancy"/>
    <property type="evidence" value="ECO:0007669"/>
    <property type="project" value="UniProtKB-KW"/>
</dbReference>
<dbReference type="CDD" id="cd00095">
    <property type="entry name" value="IFab"/>
    <property type="match status" value="1"/>
</dbReference>
<dbReference type="FunFam" id="1.20.1250.10:FF:000001">
    <property type="entry name" value="Interferon alpha"/>
    <property type="match status" value="1"/>
</dbReference>
<dbReference type="Gene3D" id="1.20.1250.10">
    <property type="match status" value="1"/>
</dbReference>
<dbReference type="InterPro" id="IPR009079">
    <property type="entry name" value="4_helix_cytokine-like_core"/>
</dbReference>
<dbReference type="InterPro" id="IPR000471">
    <property type="entry name" value="Interferon_alpha/beta/delta"/>
</dbReference>
<dbReference type="PANTHER" id="PTHR11691:SF37">
    <property type="entry name" value="INTERFERON OMEGA-1"/>
    <property type="match status" value="1"/>
</dbReference>
<dbReference type="PANTHER" id="PTHR11691">
    <property type="entry name" value="TYPE I INTERFERON"/>
    <property type="match status" value="1"/>
</dbReference>
<dbReference type="Pfam" id="PF00143">
    <property type="entry name" value="Interferon"/>
    <property type="match status" value="1"/>
</dbReference>
<dbReference type="PRINTS" id="PR00266">
    <property type="entry name" value="INTERFERONAB"/>
</dbReference>
<dbReference type="SMART" id="SM00076">
    <property type="entry name" value="IFabd"/>
    <property type="match status" value="1"/>
</dbReference>
<dbReference type="SUPFAM" id="SSF47266">
    <property type="entry name" value="4-helical cytokines"/>
    <property type="match status" value="1"/>
</dbReference>
<dbReference type="PROSITE" id="PS00252">
    <property type="entry name" value="INTERFERON_A_B_D"/>
    <property type="match status" value="1"/>
</dbReference>
<comment type="function">
    <text evidence="2">Paracrine hormone primarily responsible for maternal recognition of pregnancy. Interacts with endometrial receptors, probably type I interferon receptors, and blocks estrogen receptor expression, preventing the estrogen-induced increase in oxytocin receptor expression in the endometrium. This results in the suppression of the pulsatile endometrial release of the luteolytic hormone prostaglandin F2-alpha, hindering the regression of the corpus luteum (luteolysis) and therefore a return to ovarian cyclicity. This, and a possible direct effect of IFN-tau on prostaglandin synthesis, leads in turn to continued ovarian progesterone secretion, which stimulates the secretion by the endometrium of the nutrients required for the growth of the conceptus. In summary, displays particularly high antiviral and antiproliferative potency concurrently with particular weak cytotoxicity, high antiluteolytic activity and immunomodulatory properties. In contrast with other IFNs, IFN-tau is not virally inducible.</text>
</comment>
<comment type="subcellular location">
    <subcellularLocation>
        <location>Secreted</location>
    </subcellularLocation>
    <text>Secreted into the uterine lumen.</text>
</comment>
<comment type="tissue specificity">
    <text>Constitutively and exclusively expressed in the mononuclear cells of the extraembryonic trophectoderm.</text>
</comment>
<comment type="developmental stage">
    <text>Major secretory product synthesized by the sheep conceptus between days 13 and 21 of pregnancy.</text>
</comment>
<comment type="miscellaneous">
    <text>IFN-tau genes are intronless. They evolved from IFN-omega genes in the ruminantia suborder and have continued to duplicate independently in different lineages of the ruminantia. They code for proteins very similar in sequence but with different biological potency and pattern of expression.</text>
</comment>
<comment type="similarity">
    <text evidence="3">Belongs to the alpha/beta interferon family. IFN-alphaII subfamily.</text>
</comment>
<name>IFNT8_SHEEP</name>
<keyword id="KW-0051">Antiviral defense</keyword>
<keyword id="KW-0202">Cytokine</keyword>
<keyword id="KW-1015">Disulfide bond</keyword>
<keyword id="KW-0372">Hormone</keyword>
<keyword id="KW-0635">Pregnancy</keyword>
<keyword id="KW-1185">Reference proteome</keyword>
<keyword id="KW-0964">Secreted</keyword>
<keyword id="KW-0732">Signal</keyword>
<reference key="1">
    <citation type="journal article" date="1993" name="Biol. Reprod.">
        <title>Differential expression of distinct mRNAs for ovine trophoblast protein-1 and related sheep type I interferons.</title>
        <authorList>
            <person name="Nephew K.P."/>
            <person name="Whaley A.E."/>
            <person name="Christenson R.K."/>
            <person name="Imakawa K."/>
        </authorList>
    </citation>
    <scope>NUCLEOTIDE SEQUENCE [GENOMIC DNA]</scope>
    <source>
        <tissue>Trophectoderm</tissue>
    </source>
</reference>
<reference key="2">
    <citation type="journal article" date="1996" name="Endocrinology">
        <title>Ovine interferon tau suppresses transcription of the estrogen receptor and oxytocin receptor genes in the ovine endometrium.</title>
        <authorList>
            <person name="Spencer T.E."/>
            <person name="Bazer F.W."/>
        </authorList>
    </citation>
    <scope>FUNCTION</scope>
</reference>
<reference key="3">
    <citation type="journal article" date="1994" name="Protein Eng.">
        <title>Predicted structural motif of IFN tau.</title>
        <authorList>
            <person name="Jarpe M.A."/>
            <person name="Johnson H.M."/>
            <person name="Bazer F.W."/>
            <person name="Ott T.L."/>
            <person name="Curto E.V."/>
            <person name="Krishna N.R."/>
            <person name="Pontzer C.H."/>
        </authorList>
    </citation>
    <scope>CIRCULAR DICHROISM ANALYSIS</scope>
    <scope>3D-STRUCTURE MODELING</scope>
</reference>
<reference key="4">
    <citation type="journal article" date="1995" name="J. Interferon Cytokine Res.">
        <title>A three-dimensional model of interferon-tau.</title>
        <authorList>
            <person name="Senda T."/>
            <person name="Saitoh S."/>
            <person name="Mitsui Y."/>
            <person name="Li J."/>
            <person name="Roberts R.M."/>
        </authorList>
    </citation>
    <scope>3D-STRUCTURE MODELING</scope>
</reference>
<reference key="5">
    <citation type="journal article" date="1998" name="Biochimie">
        <title>IFN-tau: a novel subtype I IFN1. Structural characteristics, non-ubiquitous expression, structure-function relationships, a pregnancy hormonal embryonic signal and cross-species therapeutic potentialities.</title>
        <authorList>
            <person name="Martal J.L."/>
            <person name="Chene N.M."/>
            <person name="Huynh L.P."/>
            <person name="L'Haridon R.M."/>
            <person name="Reinaud P.B."/>
            <person name="Guillomot M.W."/>
            <person name="Charlier M.A."/>
            <person name="Charpigny S.Y."/>
        </authorList>
    </citation>
    <scope>REVIEW</scope>
</reference>
<accession>Q08072</accession>
<feature type="signal peptide" evidence="1">
    <location>
        <begin position="1"/>
        <end position="23"/>
    </location>
</feature>
<feature type="chain" id="PRO_0000016419" description="Interferon tau-8">
    <location>
        <begin position="24"/>
        <end position="195"/>
    </location>
</feature>
<feature type="disulfide bond" evidence="1">
    <location>
        <begin position="24"/>
        <end position="122"/>
    </location>
</feature>
<feature type="disulfide bond" evidence="1">
    <location>
        <begin position="52"/>
        <end position="162"/>
    </location>
</feature>
<gene>
    <name type="primary">IFNT8</name>
</gene>
<evidence type="ECO:0000250" key="1"/>
<evidence type="ECO:0000269" key="2">
    <source>
    </source>
</evidence>
<evidence type="ECO:0000305" key="3"/>
<proteinExistence type="evidence at transcript level"/>
<organism>
    <name type="scientific">Ovis aries</name>
    <name type="common">Sheep</name>
    <dbReference type="NCBI Taxonomy" id="9940"/>
    <lineage>
        <taxon>Eukaryota</taxon>
        <taxon>Metazoa</taxon>
        <taxon>Chordata</taxon>
        <taxon>Craniata</taxon>
        <taxon>Vertebrata</taxon>
        <taxon>Euteleostomi</taxon>
        <taxon>Mammalia</taxon>
        <taxon>Eutheria</taxon>
        <taxon>Laurasiatheria</taxon>
        <taxon>Artiodactyla</taxon>
        <taxon>Ruminantia</taxon>
        <taxon>Pecora</taxon>
        <taxon>Bovidae</taxon>
        <taxon>Caprinae</taxon>
        <taxon>Ovis</taxon>
    </lineage>
</organism>